<sequence>MKVTVGPDPSLVYRPDVDPEMAKDKASFRNYTSGPLLDRVFTTYKLMHTHQTVDFVRSKHAQFGGFSYKKMTVMEAVDLLDGLVDESDPDVDFPNSFHAFQTAEGIRKAHPDKDWFHLVGLLHDLGKVLALFGEPQWAVVGDTFPVGCRPQASVVFCDSTFQDNPDLQDPRYSTELGMYQPHCGLDRVLMSWGHDEYMYQVMKFNKFSLPPEAFYMIRFHSFYPWHTGSDYQQLCSQQDLAMLPWVQEFNKFDLYTKCPDLPDVDKLRPYYQGLIDKYCPGILSW</sequence>
<keyword id="KW-0963">Cytoplasm</keyword>
<keyword id="KW-0408">Iron</keyword>
<keyword id="KW-0479">Metal-binding</keyword>
<keyword id="KW-0560">Oxidoreductase</keyword>
<keyword id="KW-0597">Phosphoprotein</keyword>
<keyword id="KW-1185">Reference proteome</keyword>
<reference key="1">
    <citation type="submission" date="2004-11" db="EMBL/GenBank/DDBJ databases">
        <authorList>
            <consortium name="The German cDNA consortium"/>
        </authorList>
    </citation>
    <scope>NUCLEOTIDE SEQUENCE [LARGE SCALE MRNA]</scope>
    <source>
        <tissue>Kidney</tissue>
    </source>
</reference>
<dbReference type="EC" id="1.13.99.1"/>
<dbReference type="EMBL" id="CR857374">
    <property type="protein sequence ID" value="CAH89668.1"/>
    <property type="molecule type" value="mRNA"/>
</dbReference>
<dbReference type="RefSeq" id="NP_001124754.1">
    <property type="nucleotide sequence ID" value="NM_001131282.2"/>
</dbReference>
<dbReference type="SMR" id="Q5REY9"/>
<dbReference type="FunCoup" id="Q5REY9">
    <property type="interactions" value="337"/>
</dbReference>
<dbReference type="STRING" id="9601.ENSPPYP00000013373"/>
<dbReference type="Ensembl" id="ENSPPYT00000013919.3">
    <property type="protein sequence ID" value="ENSPPYP00000013373.2"/>
    <property type="gene ID" value="ENSPPYG00000011988.3"/>
</dbReference>
<dbReference type="GeneID" id="100171604"/>
<dbReference type="KEGG" id="pon:100171604"/>
<dbReference type="CTD" id="55586"/>
<dbReference type="eggNOG" id="KOG1573">
    <property type="taxonomic scope" value="Eukaryota"/>
</dbReference>
<dbReference type="GeneTree" id="ENSGT00390000016211"/>
<dbReference type="HOGENOM" id="CLU_050259_1_0_1"/>
<dbReference type="InParanoid" id="Q5REY9"/>
<dbReference type="OMA" id="RYNTKYG"/>
<dbReference type="OrthoDB" id="5151075at2759"/>
<dbReference type="TreeFam" id="TF300089"/>
<dbReference type="UniPathway" id="UPA00111">
    <property type="reaction ID" value="UER00527"/>
</dbReference>
<dbReference type="Proteomes" id="UP000001595">
    <property type="component" value="Chromosome 22"/>
</dbReference>
<dbReference type="GO" id="GO:0005737">
    <property type="term" value="C:cytoplasm"/>
    <property type="evidence" value="ECO:0007669"/>
    <property type="project" value="UniProtKB-SubCell"/>
</dbReference>
<dbReference type="GO" id="GO:0004033">
    <property type="term" value="F:aldo-keto reductase (NADPH) activity"/>
    <property type="evidence" value="ECO:0007669"/>
    <property type="project" value="Ensembl"/>
</dbReference>
<dbReference type="GO" id="GO:0008199">
    <property type="term" value="F:ferric iron binding"/>
    <property type="evidence" value="ECO:0000250"/>
    <property type="project" value="UniProtKB"/>
</dbReference>
<dbReference type="GO" id="GO:0050113">
    <property type="term" value="F:inositol oxygenase activity"/>
    <property type="evidence" value="ECO:0000250"/>
    <property type="project" value="UniProtKB"/>
</dbReference>
<dbReference type="GO" id="GO:0016651">
    <property type="term" value="F:oxidoreductase activity, acting on NAD(P)H"/>
    <property type="evidence" value="ECO:0007669"/>
    <property type="project" value="Ensembl"/>
</dbReference>
<dbReference type="GO" id="GO:0019310">
    <property type="term" value="P:inositol catabolic process"/>
    <property type="evidence" value="ECO:0000250"/>
    <property type="project" value="UniProtKB"/>
</dbReference>
<dbReference type="InterPro" id="IPR007828">
    <property type="entry name" value="Inositol_oxygenase"/>
</dbReference>
<dbReference type="PANTHER" id="PTHR12588:SF0">
    <property type="entry name" value="INOSITOL OXYGENASE"/>
    <property type="match status" value="1"/>
</dbReference>
<dbReference type="PANTHER" id="PTHR12588">
    <property type="entry name" value="MYOINOSITOL OXYGENASE"/>
    <property type="match status" value="1"/>
</dbReference>
<dbReference type="Pfam" id="PF05153">
    <property type="entry name" value="MIOX"/>
    <property type="match status" value="1"/>
</dbReference>
<dbReference type="SUPFAM" id="SSF109604">
    <property type="entry name" value="HD-domain/PDEase-like"/>
    <property type="match status" value="1"/>
</dbReference>
<evidence type="ECO:0000250" key="1"/>
<evidence type="ECO:0000250" key="2">
    <source>
        <dbReference type="UniProtKB" id="Q9QXN4"/>
    </source>
</evidence>
<evidence type="ECO:0000305" key="3"/>
<proteinExistence type="evidence at transcript level"/>
<gene>
    <name type="primary">MIOX</name>
</gene>
<comment type="catalytic activity">
    <reaction>
        <text>myo-inositol + O2 = D-glucuronate + H2O + H(+)</text>
        <dbReference type="Rhea" id="RHEA:23696"/>
        <dbReference type="ChEBI" id="CHEBI:15377"/>
        <dbReference type="ChEBI" id="CHEBI:15378"/>
        <dbReference type="ChEBI" id="CHEBI:15379"/>
        <dbReference type="ChEBI" id="CHEBI:17268"/>
        <dbReference type="ChEBI" id="CHEBI:58720"/>
        <dbReference type="EC" id="1.13.99.1"/>
    </reaction>
</comment>
<comment type="cofactor">
    <cofactor evidence="1">
        <name>Fe cation</name>
        <dbReference type="ChEBI" id="CHEBI:24875"/>
    </cofactor>
    <text evidence="1">Binds 2 iron ions per subunit.</text>
</comment>
<comment type="pathway">
    <text>Polyol metabolism; myo-inositol degradation into D-glucuronate; D-glucuronate from myo-inositol: step 1/1.</text>
</comment>
<comment type="subcellular location">
    <subcellularLocation>
        <location evidence="1">Cytoplasm</location>
    </subcellularLocation>
</comment>
<comment type="similarity">
    <text evidence="3">Belongs to the myo-inositol oxygenase family.</text>
</comment>
<name>MIOX_PONAB</name>
<protein>
    <recommendedName>
        <fullName>Inositol oxygenase</fullName>
        <ecNumber>1.13.99.1</ecNumber>
    </recommendedName>
    <alternativeName>
        <fullName>Myo-inositol oxygenase</fullName>
        <shortName>MI oxygenase</shortName>
    </alternativeName>
</protein>
<accession>Q5REY9</accession>
<organism>
    <name type="scientific">Pongo abelii</name>
    <name type="common">Sumatran orangutan</name>
    <name type="synonym">Pongo pygmaeus abelii</name>
    <dbReference type="NCBI Taxonomy" id="9601"/>
    <lineage>
        <taxon>Eukaryota</taxon>
        <taxon>Metazoa</taxon>
        <taxon>Chordata</taxon>
        <taxon>Craniata</taxon>
        <taxon>Vertebrata</taxon>
        <taxon>Euteleostomi</taxon>
        <taxon>Mammalia</taxon>
        <taxon>Eutheria</taxon>
        <taxon>Euarchontoglires</taxon>
        <taxon>Primates</taxon>
        <taxon>Haplorrhini</taxon>
        <taxon>Catarrhini</taxon>
        <taxon>Hominidae</taxon>
        <taxon>Pongo</taxon>
    </lineage>
</organism>
<feature type="chain" id="PRO_0000079151" description="Inositol oxygenase">
    <location>
        <begin position="1"/>
        <end position="285"/>
    </location>
</feature>
<feature type="binding site" evidence="1">
    <location>
        <position position="29"/>
    </location>
    <ligand>
        <name>substrate</name>
    </ligand>
</feature>
<feature type="binding site" evidence="1">
    <location>
        <begin position="85"/>
        <end position="87"/>
    </location>
    <ligand>
        <name>substrate</name>
    </ligand>
</feature>
<feature type="binding site" evidence="1">
    <location>
        <position position="98"/>
    </location>
    <ligand>
        <name>Fe cation</name>
        <dbReference type="ChEBI" id="CHEBI:24875"/>
        <label>1</label>
    </ligand>
</feature>
<feature type="binding site" evidence="1">
    <location>
        <position position="123"/>
    </location>
    <ligand>
        <name>Fe cation</name>
        <dbReference type="ChEBI" id="CHEBI:24875"/>
        <label>1</label>
    </ligand>
</feature>
<feature type="binding site" evidence="1">
    <location>
        <position position="124"/>
    </location>
    <ligand>
        <name>Fe cation</name>
        <dbReference type="ChEBI" id="CHEBI:24875"/>
        <label>1</label>
    </ligand>
</feature>
<feature type="binding site" evidence="1">
    <location>
        <position position="124"/>
    </location>
    <ligand>
        <name>Fe cation</name>
        <dbReference type="ChEBI" id="CHEBI:24875"/>
        <label>2</label>
    </ligand>
</feature>
<feature type="binding site" evidence="1">
    <location>
        <position position="127"/>
    </location>
    <ligand>
        <name>substrate</name>
    </ligand>
</feature>
<feature type="binding site" evidence="1">
    <location>
        <begin position="141"/>
        <end position="142"/>
    </location>
    <ligand>
        <name>substrate</name>
    </ligand>
</feature>
<feature type="binding site" evidence="1">
    <location>
        <position position="194"/>
    </location>
    <ligand>
        <name>Fe cation</name>
        <dbReference type="ChEBI" id="CHEBI:24875"/>
        <label>2</label>
    </ligand>
</feature>
<feature type="binding site" evidence="1">
    <location>
        <begin position="220"/>
        <end position="221"/>
    </location>
    <ligand>
        <name>substrate</name>
    </ligand>
</feature>
<feature type="binding site" evidence="1">
    <location>
        <position position="220"/>
    </location>
    <ligand>
        <name>Fe cation</name>
        <dbReference type="ChEBI" id="CHEBI:24875"/>
        <label>2</label>
    </ligand>
</feature>
<feature type="binding site" evidence="1">
    <location>
        <position position="253"/>
    </location>
    <ligand>
        <name>Fe cation</name>
        <dbReference type="ChEBI" id="CHEBI:24875"/>
        <label>1</label>
    </ligand>
</feature>
<feature type="modified residue" description="Phosphoserine" evidence="2">
    <location>
        <position position="33"/>
    </location>
</feature>